<protein>
    <recommendedName>
        <fullName>Uncharacterized RNA methyltransferase FN1713</fullName>
        <ecNumber>2.1.1.-</ecNumber>
    </recommendedName>
</protein>
<name>Y1713_FUSNN</name>
<accession>Q8R5Z8</accession>
<organism>
    <name type="scientific">Fusobacterium nucleatum subsp. nucleatum (strain ATCC 25586 / DSM 15643 / BCRC 10681 / CIP 101130 / JCM 8532 / KCTC 2640 / LMG 13131 / VPI 4355)</name>
    <dbReference type="NCBI Taxonomy" id="190304"/>
    <lineage>
        <taxon>Bacteria</taxon>
        <taxon>Fusobacteriati</taxon>
        <taxon>Fusobacteriota</taxon>
        <taxon>Fusobacteriia</taxon>
        <taxon>Fusobacteriales</taxon>
        <taxon>Fusobacteriaceae</taxon>
        <taxon>Fusobacterium</taxon>
    </lineage>
</organism>
<gene>
    <name type="ordered locus">FN1713</name>
</gene>
<dbReference type="EC" id="2.1.1.-"/>
<dbReference type="EMBL" id="AE009951">
    <property type="protein sequence ID" value="AAL93828.1"/>
    <property type="molecule type" value="Genomic_DNA"/>
</dbReference>
<dbReference type="RefSeq" id="NP_602529.1">
    <property type="nucleotide sequence ID" value="NC_003454.1"/>
</dbReference>
<dbReference type="SMR" id="Q8R5Z8"/>
<dbReference type="FunCoup" id="Q8R5Z8">
    <property type="interactions" value="447"/>
</dbReference>
<dbReference type="STRING" id="190304.FN1713"/>
<dbReference type="PaxDb" id="190304-FN1713"/>
<dbReference type="EnsemblBacteria" id="AAL93828">
    <property type="protein sequence ID" value="AAL93828"/>
    <property type="gene ID" value="FN1713"/>
</dbReference>
<dbReference type="KEGG" id="fnu:FN1713"/>
<dbReference type="PATRIC" id="fig|190304.8.peg.202"/>
<dbReference type="eggNOG" id="COG2265">
    <property type="taxonomic scope" value="Bacteria"/>
</dbReference>
<dbReference type="HOGENOM" id="CLU_014689_7_1_0"/>
<dbReference type="InParanoid" id="Q8R5Z8"/>
<dbReference type="BioCyc" id="FNUC190304:G1FZS-214-MONOMER"/>
<dbReference type="Proteomes" id="UP000002521">
    <property type="component" value="Chromosome"/>
</dbReference>
<dbReference type="GO" id="GO:0070041">
    <property type="term" value="F:rRNA (uridine-C5-)-methyltransferase activity"/>
    <property type="evidence" value="ECO:0000318"/>
    <property type="project" value="GO_Central"/>
</dbReference>
<dbReference type="GO" id="GO:0070475">
    <property type="term" value="P:rRNA base methylation"/>
    <property type="evidence" value="ECO:0000318"/>
    <property type="project" value="GO_Central"/>
</dbReference>
<dbReference type="CDD" id="cd02440">
    <property type="entry name" value="AdoMet_MTases"/>
    <property type="match status" value="1"/>
</dbReference>
<dbReference type="FunFam" id="3.40.50.150:FF:000009">
    <property type="entry name" value="23S rRNA (Uracil(1939)-C(5))-methyltransferase RlmD"/>
    <property type="match status" value="1"/>
</dbReference>
<dbReference type="FunFam" id="2.40.50.140:FF:000097">
    <property type="entry name" value="23S rRNA (uracil(1939)-C(5))-methyltransferase RlmD"/>
    <property type="match status" value="1"/>
</dbReference>
<dbReference type="FunFam" id="2.40.50.1070:FF:000003">
    <property type="entry name" value="23S rRNA (Uracil-5-)-methyltransferase RumA"/>
    <property type="match status" value="1"/>
</dbReference>
<dbReference type="Gene3D" id="2.40.50.1070">
    <property type="match status" value="1"/>
</dbReference>
<dbReference type="Gene3D" id="2.40.50.140">
    <property type="entry name" value="Nucleic acid-binding proteins"/>
    <property type="match status" value="1"/>
</dbReference>
<dbReference type="Gene3D" id="3.40.50.150">
    <property type="entry name" value="Vaccinia Virus protein VP39"/>
    <property type="match status" value="1"/>
</dbReference>
<dbReference type="InterPro" id="IPR030390">
    <property type="entry name" value="MeTrfase_TrmA_AS"/>
</dbReference>
<dbReference type="InterPro" id="IPR030391">
    <property type="entry name" value="MeTrfase_TrmA_CS"/>
</dbReference>
<dbReference type="InterPro" id="IPR012340">
    <property type="entry name" value="NA-bd_OB-fold"/>
</dbReference>
<dbReference type="InterPro" id="IPR029063">
    <property type="entry name" value="SAM-dependent_MTases_sf"/>
</dbReference>
<dbReference type="InterPro" id="IPR002792">
    <property type="entry name" value="TRAM_dom"/>
</dbReference>
<dbReference type="InterPro" id="IPR010280">
    <property type="entry name" value="U5_MeTrfase_fam"/>
</dbReference>
<dbReference type="NCBIfam" id="TIGR00479">
    <property type="entry name" value="rumA"/>
    <property type="match status" value="1"/>
</dbReference>
<dbReference type="PANTHER" id="PTHR11061">
    <property type="entry name" value="RNA M5U METHYLTRANSFERASE"/>
    <property type="match status" value="1"/>
</dbReference>
<dbReference type="PANTHER" id="PTHR11061:SF30">
    <property type="entry name" value="TRNA (URACIL(54)-C(5))-METHYLTRANSFERASE"/>
    <property type="match status" value="1"/>
</dbReference>
<dbReference type="Pfam" id="PF01938">
    <property type="entry name" value="TRAM"/>
    <property type="match status" value="1"/>
</dbReference>
<dbReference type="Pfam" id="PF05958">
    <property type="entry name" value="tRNA_U5-meth_tr"/>
    <property type="match status" value="1"/>
</dbReference>
<dbReference type="SUPFAM" id="SSF50249">
    <property type="entry name" value="Nucleic acid-binding proteins"/>
    <property type="match status" value="1"/>
</dbReference>
<dbReference type="SUPFAM" id="SSF53335">
    <property type="entry name" value="S-adenosyl-L-methionine-dependent methyltransferases"/>
    <property type="match status" value="1"/>
</dbReference>
<dbReference type="PROSITE" id="PS51687">
    <property type="entry name" value="SAM_MT_RNA_M5U"/>
    <property type="match status" value="1"/>
</dbReference>
<dbReference type="PROSITE" id="PS50926">
    <property type="entry name" value="TRAM"/>
    <property type="match status" value="1"/>
</dbReference>
<dbReference type="PROSITE" id="PS01230">
    <property type="entry name" value="TRMA_1"/>
    <property type="match status" value="1"/>
</dbReference>
<dbReference type="PROSITE" id="PS01231">
    <property type="entry name" value="TRMA_2"/>
    <property type="match status" value="1"/>
</dbReference>
<evidence type="ECO:0000255" key="1">
    <source>
        <dbReference type="PROSITE-ProRule" id="PRU00208"/>
    </source>
</evidence>
<evidence type="ECO:0000255" key="2">
    <source>
        <dbReference type="PROSITE-ProRule" id="PRU01024"/>
    </source>
</evidence>
<proteinExistence type="inferred from homology"/>
<keyword id="KW-0489">Methyltransferase</keyword>
<keyword id="KW-1185">Reference proteome</keyword>
<keyword id="KW-0949">S-adenosyl-L-methionine</keyword>
<keyword id="KW-0808">Transferase</keyword>
<sequence>MMRSSTLKLRNKMLKVSDIIQIKIDKIVFGGEGLGYYNGFAVFVPMSIPEDELEIEIISIKKTYARGLIKNIIKASPERIDNHKFTFEDFYGCDFAMLKYESQLKYKRFMVEEVIRKIAGLSDIEISDVLASEDIYNYRNKIIEPFSVYANKIITGFFKRKSHEVFEVDENILNSKLGNKIIKELKEILNKNKISVYDENTHKGILRNIMIRTNSNNEAMVVLIINSNKITENIKKLLFKLRENIEEIKSIYISLNSKKTNTVIGEKNILIYGEKSIKENINRIEFHISPTSFFQINVKQAKRLYDIAISFFDNIDNKYIVDAYSGTGTIGMIIAKKAKKVYAIEIVKSASEDGEKTAKENGIENIEFINGAVEKELVKLVNNNQKIDTIIFDPPRKGLETSIIDKVAELNLKEVVYISCNPSTFARDVKLFSEKGYVLKKLQAVDMFPQTSHIECVGLIERKI</sequence>
<feature type="chain" id="PRO_0000161980" description="Uncharacterized RNA methyltransferase FN1713">
    <location>
        <begin position="1"/>
        <end position="464"/>
    </location>
</feature>
<feature type="domain" description="TRAM" evidence="1">
    <location>
        <begin position="13"/>
        <end position="71"/>
    </location>
</feature>
<feature type="active site" description="Nucleophile" evidence="2">
    <location>
        <position position="420"/>
    </location>
</feature>
<feature type="binding site" evidence="2">
    <location>
        <position position="295"/>
    </location>
    <ligand>
        <name>S-adenosyl-L-methionine</name>
        <dbReference type="ChEBI" id="CHEBI:59789"/>
    </ligand>
</feature>
<feature type="binding site" evidence="2">
    <location>
        <position position="324"/>
    </location>
    <ligand>
        <name>S-adenosyl-L-methionine</name>
        <dbReference type="ChEBI" id="CHEBI:59789"/>
    </ligand>
</feature>
<feature type="binding site" evidence="2">
    <location>
        <position position="345"/>
    </location>
    <ligand>
        <name>S-adenosyl-L-methionine</name>
        <dbReference type="ChEBI" id="CHEBI:59789"/>
    </ligand>
</feature>
<feature type="binding site" evidence="2">
    <location>
        <position position="393"/>
    </location>
    <ligand>
        <name>S-adenosyl-L-methionine</name>
        <dbReference type="ChEBI" id="CHEBI:59789"/>
    </ligand>
</feature>
<reference key="1">
    <citation type="journal article" date="2002" name="J. Bacteriol.">
        <title>Genome sequence and analysis of the oral bacterium Fusobacterium nucleatum strain ATCC 25586.</title>
        <authorList>
            <person name="Kapatral V."/>
            <person name="Anderson I."/>
            <person name="Ivanova N."/>
            <person name="Reznik G."/>
            <person name="Los T."/>
            <person name="Lykidis A."/>
            <person name="Bhattacharyya A."/>
            <person name="Bartman A."/>
            <person name="Gardner W."/>
            <person name="Grechkin G."/>
            <person name="Zhu L."/>
            <person name="Vasieva O."/>
            <person name="Chu L."/>
            <person name="Kogan Y."/>
            <person name="Chaga O."/>
            <person name="Goltsman E."/>
            <person name="Bernal A."/>
            <person name="Larsen N."/>
            <person name="D'Souza M."/>
            <person name="Walunas T."/>
            <person name="Pusch G."/>
            <person name="Haselkorn R."/>
            <person name="Fonstein M."/>
            <person name="Kyrpides N.C."/>
            <person name="Overbeek R."/>
        </authorList>
    </citation>
    <scope>NUCLEOTIDE SEQUENCE [LARGE SCALE GENOMIC DNA]</scope>
    <source>
        <strain>ATCC 25586 / DSM 15643 / BCRC 10681 / CIP 101130 / JCM 8532 / KCTC 2640 / LMG 13131 / VPI 4355</strain>
    </source>
</reference>
<comment type="similarity">
    <text evidence="2">Belongs to the class I-like SAM-binding methyltransferase superfamily. RNA M5U methyltransferase family.</text>
</comment>